<accession>O13914</accession>
<comment type="function">
    <text evidence="1">Catalyzes the attachment of alanine to tRNA(Ala) in a two-step reaction: alanine is first activated by ATP to form Ala-AMP and then transferred to the acceptor end of tRNA(Ala). Also edits incorrectly charged tRNA(Ala) via its editing domain.</text>
</comment>
<comment type="catalytic activity">
    <reaction evidence="1">
        <text>tRNA(Ala) + L-alanine + ATP = L-alanyl-tRNA(Ala) + AMP + diphosphate</text>
        <dbReference type="Rhea" id="RHEA:12540"/>
        <dbReference type="Rhea" id="RHEA-COMP:9657"/>
        <dbReference type="Rhea" id="RHEA-COMP:9923"/>
        <dbReference type="ChEBI" id="CHEBI:30616"/>
        <dbReference type="ChEBI" id="CHEBI:33019"/>
        <dbReference type="ChEBI" id="CHEBI:57972"/>
        <dbReference type="ChEBI" id="CHEBI:78442"/>
        <dbReference type="ChEBI" id="CHEBI:78497"/>
        <dbReference type="ChEBI" id="CHEBI:456215"/>
        <dbReference type="EC" id="6.1.1.7"/>
    </reaction>
</comment>
<comment type="cofactor">
    <cofactor evidence="1">
        <name>Zn(2+)</name>
        <dbReference type="ChEBI" id="CHEBI:29105"/>
    </cofactor>
    <text evidence="1">Binds 1 zinc ion per subunit.</text>
</comment>
<comment type="subunit">
    <text evidence="1">Monomer.</text>
</comment>
<comment type="subcellular location">
    <subcellularLocation>
        <location evidence="1">Mitochondrion</location>
    </subcellularLocation>
    <subcellularLocation>
        <location evidence="1">Cytoplasm</location>
    </subcellularLocation>
</comment>
<comment type="domain">
    <text evidence="1">Consists of three domains; the N-terminal catalytic domain, the editing domain and the C-terminal C-Ala domain. The editing domain removes incorrectly charged amino acids, while the C-Ala domain, along with tRNA(Ala), serves as a bridge to cooperatively bring together the editing and aminoacylation centers thus stimulating deacylation of misacylated tRNAs.</text>
</comment>
<comment type="similarity">
    <text evidence="1">Belongs to the class-II aminoacyl-tRNA synthetase family.</text>
</comment>
<protein>
    <recommendedName>
        <fullName evidence="1">Alanine--tRNA ligase</fullName>
        <ecNumber evidence="1">6.1.1.7</ecNumber>
    </recommendedName>
    <alternativeName>
        <fullName evidence="1">Alanyl-tRNA synthetase</fullName>
        <shortName evidence="1">AlaRS</shortName>
    </alternativeName>
</protein>
<organism>
    <name type="scientific">Schizosaccharomyces pombe (strain 972 / ATCC 24843)</name>
    <name type="common">Fission yeast</name>
    <dbReference type="NCBI Taxonomy" id="284812"/>
    <lineage>
        <taxon>Eukaryota</taxon>
        <taxon>Fungi</taxon>
        <taxon>Dikarya</taxon>
        <taxon>Ascomycota</taxon>
        <taxon>Taphrinomycotina</taxon>
        <taxon>Schizosaccharomycetes</taxon>
        <taxon>Schizosaccharomycetales</taxon>
        <taxon>Schizosaccharomycetaceae</taxon>
        <taxon>Schizosaccharomyces</taxon>
    </lineage>
</organism>
<proteinExistence type="evidence at protein level"/>
<gene>
    <name type="primary">ala1</name>
    <name type="synonym">ars1</name>
    <name type="ORF">SPAC23C11.09</name>
</gene>
<evidence type="ECO:0000255" key="1">
    <source>
        <dbReference type="HAMAP-Rule" id="MF_03133"/>
    </source>
</evidence>
<evidence type="ECO:0000269" key="2">
    <source>
    </source>
</evidence>
<reference key="1">
    <citation type="journal article" date="2002" name="Nature">
        <title>The genome sequence of Schizosaccharomyces pombe.</title>
        <authorList>
            <person name="Wood V."/>
            <person name="Gwilliam R."/>
            <person name="Rajandream M.A."/>
            <person name="Lyne M.H."/>
            <person name="Lyne R."/>
            <person name="Stewart A."/>
            <person name="Sgouros J.G."/>
            <person name="Peat N."/>
            <person name="Hayles J."/>
            <person name="Baker S.G."/>
            <person name="Basham D."/>
            <person name="Bowman S."/>
            <person name="Brooks K."/>
            <person name="Brown D."/>
            <person name="Brown S."/>
            <person name="Chillingworth T."/>
            <person name="Churcher C.M."/>
            <person name="Collins M."/>
            <person name="Connor R."/>
            <person name="Cronin A."/>
            <person name="Davis P."/>
            <person name="Feltwell T."/>
            <person name="Fraser A."/>
            <person name="Gentles S."/>
            <person name="Goble A."/>
            <person name="Hamlin N."/>
            <person name="Harris D.E."/>
            <person name="Hidalgo J."/>
            <person name="Hodgson G."/>
            <person name="Holroyd S."/>
            <person name="Hornsby T."/>
            <person name="Howarth S."/>
            <person name="Huckle E.J."/>
            <person name="Hunt S."/>
            <person name="Jagels K."/>
            <person name="James K.D."/>
            <person name="Jones L."/>
            <person name="Jones M."/>
            <person name="Leather S."/>
            <person name="McDonald S."/>
            <person name="McLean J."/>
            <person name="Mooney P."/>
            <person name="Moule S."/>
            <person name="Mungall K.L."/>
            <person name="Murphy L.D."/>
            <person name="Niblett D."/>
            <person name="Odell C."/>
            <person name="Oliver K."/>
            <person name="O'Neil S."/>
            <person name="Pearson D."/>
            <person name="Quail M.A."/>
            <person name="Rabbinowitsch E."/>
            <person name="Rutherford K.M."/>
            <person name="Rutter S."/>
            <person name="Saunders D."/>
            <person name="Seeger K."/>
            <person name="Sharp S."/>
            <person name="Skelton J."/>
            <person name="Simmonds M.N."/>
            <person name="Squares R."/>
            <person name="Squares S."/>
            <person name="Stevens K."/>
            <person name="Taylor K."/>
            <person name="Taylor R.G."/>
            <person name="Tivey A."/>
            <person name="Walsh S.V."/>
            <person name="Warren T."/>
            <person name="Whitehead S."/>
            <person name="Woodward J.R."/>
            <person name="Volckaert G."/>
            <person name="Aert R."/>
            <person name="Robben J."/>
            <person name="Grymonprez B."/>
            <person name="Weltjens I."/>
            <person name="Vanstreels E."/>
            <person name="Rieger M."/>
            <person name="Schaefer M."/>
            <person name="Mueller-Auer S."/>
            <person name="Gabel C."/>
            <person name="Fuchs M."/>
            <person name="Duesterhoeft A."/>
            <person name="Fritzc C."/>
            <person name="Holzer E."/>
            <person name="Moestl D."/>
            <person name="Hilbert H."/>
            <person name="Borzym K."/>
            <person name="Langer I."/>
            <person name="Beck A."/>
            <person name="Lehrach H."/>
            <person name="Reinhardt R."/>
            <person name="Pohl T.M."/>
            <person name="Eger P."/>
            <person name="Zimmermann W."/>
            <person name="Wedler H."/>
            <person name="Wambutt R."/>
            <person name="Purnelle B."/>
            <person name="Goffeau A."/>
            <person name="Cadieu E."/>
            <person name="Dreano S."/>
            <person name="Gloux S."/>
            <person name="Lelaure V."/>
            <person name="Mottier S."/>
            <person name="Galibert F."/>
            <person name="Aves S.J."/>
            <person name="Xiang Z."/>
            <person name="Hunt C."/>
            <person name="Moore K."/>
            <person name="Hurst S.M."/>
            <person name="Lucas M."/>
            <person name="Rochet M."/>
            <person name="Gaillardin C."/>
            <person name="Tallada V.A."/>
            <person name="Garzon A."/>
            <person name="Thode G."/>
            <person name="Daga R.R."/>
            <person name="Cruzado L."/>
            <person name="Jimenez J."/>
            <person name="Sanchez M."/>
            <person name="del Rey F."/>
            <person name="Benito J."/>
            <person name="Dominguez A."/>
            <person name="Revuelta J.L."/>
            <person name="Moreno S."/>
            <person name="Armstrong J."/>
            <person name="Forsburg S.L."/>
            <person name="Cerutti L."/>
            <person name="Lowe T."/>
            <person name="McCombie W.R."/>
            <person name="Paulsen I."/>
            <person name="Potashkin J."/>
            <person name="Shpakovski G.V."/>
            <person name="Ussery D."/>
            <person name="Barrell B.G."/>
            <person name="Nurse P."/>
        </authorList>
    </citation>
    <scope>NUCLEOTIDE SEQUENCE [LARGE SCALE GENOMIC DNA]</scope>
    <source>
        <strain>972 / ATCC 24843</strain>
    </source>
</reference>
<reference key="2">
    <citation type="journal article" date="2008" name="J. Proteome Res.">
        <title>Phosphoproteome analysis of fission yeast.</title>
        <authorList>
            <person name="Wilson-Grady J.T."/>
            <person name="Villen J."/>
            <person name="Gygi S.P."/>
        </authorList>
    </citation>
    <scope>PHOSPHORYLATION [LARGE SCALE ANALYSIS] AT SER-389</scope>
    <scope>IDENTIFICATION BY MASS SPECTROMETRY</scope>
</reference>
<keyword id="KW-0030">Aminoacyl-tRNA synthetase</keyword>
<keyword id="KW-0067">ATP-binding</keyword>
<keyword id="KW-0963">Cytoplasm</keyword>
<keyword id="KW-0436">Ligase</keyword>
<keyword id="KW-0479">Metal-binding</keyword>
<keyword id="KW-0496">Mitochondrion</keyword>
<keyword id="KW-0547">Nucleotide-binding</keyword>
<keyword id="KW-0597">Phosphoprotein</keyword>
<keyword id="KW-0648">Protein biosynthesis</keyword>
<keyword id="KW-1185">Reference proteome</keyword>
<keyword id="KW-0694">RNA-binding</keyword>
<keyword id="KW-0820">tRNA-binding</keyword>
<keyword id="KW-0862">Zinc</keyword>
<dbReference type="EC" id="6.1.1.7" evidence="1"/>
<dbReference type="EMBL" id="CU329670">
    <property type="protein sequence ID" value="CAB11162.1"/>
    <property type="molecule type" value="Genomic_DNA"/>
</dbReference>
<dbReference type="PIR" id="T38247">
    <property type="entry name" value="T38247"/>
</dbReference>
<dbReference type="RefSeq" id="NP_593640.1">
    <property type="nucleotide sequence ID" value="NM_001019071.2"/>
</dbReference>
<dbReference type="SMR" id="O13914"/>
<dbReference type="BioGRID" id="278513">
    <property type="interactions" value="5"/>
</dbReference>
<dbReference type="FunCoup" id="O13914">
    <property type="interactions" value="778"/>
</dbReference>
<dbReference type="STRING" id="284812.O13914"/>
<dbReference type="iPTMnet" id="O13914"/>
<dbReference type="PaxDb" id="4896-SPAC23C11.09.1"/>
<dbReference type="EnsemblFungi" id="SPAC23C11.09.1">
    <property type="protein sequence ID" value="SPAC23C11.09.1:pep"/>
    <property type="gene ID" value="SPAC23C11.09"/>
</dbReference>
<dbReference type="GeneID" id="2542031"/>
<dbReference type="KEGG" id="spo:2542031"/>
<dbReference type="PomBase" id="SPAC23C11.09">
    <property type="gene designation" value="ala1"/>
</dbReference>
<dbReference type="VEuPathDB" id="FungiDB:SPAC23C11.09"/>
<dbReference type="eggNOG" id="KOG0188">
    <property type="taxonomic scope" value="Eukaryota"/>
</dbReference>
<dbReference type="HOGENOM" id="CLU_004485_5_0_1"/>
<dbReference type="InParanoid" id="O13914"/>
<dbReference type="OMA" id="NKKDNFW"/>
<dbReference type="PhylomeDB" id="O13914"/>
<dbReference type="PRO" id="PR:O13914"/>
<dbReference type="Proteomes" id="UP000002485">
    <property type="component" value="Chromosome I"/>
</dbReference>
<dbReference type="GO" id="GO:0005829">
    <property type="term" value="C:cytosol"/>
    <property type="evidence" value="ECO:0007005"/>
    <property type="project" value="PomBase"/>
</dbReference>
<dbReference type="GO" id="GO:0005759">
    <property type="term" value="C:mitochondrial matrix"/>
    <property type="evidence" value="ECO:0000305"/>
    <property type="project" value="PomBase"/>
</dbReference>
<dbReference type="GO" id="GO:0005739">
    <property type="term" value="C:mitochondrion"/>
    <property type="evidence" value="ECO:0000318"/>
    <property type="project" value="GO_Central"/>
</dbReference>
<dbReference type="GO" id="GO:0004813">
    <property type="term" value="F:alanine-tRNA ligase activity"/>
    <property type="evidence" value="ECO:0000318"/>
    <property type="project" value="GO_Central"/>
</dbReference>
<dbReference type="GO" id="GO:0002161">
    <property type="term" value="F:aminoacyl-tRNA deacylase activity"/>
    <property type="evidence" value="ECO:0000318"/>
    <property type="project" value="GO_Central"/>
</dbReference>
<dbReference type="GO" id="GO:0005524">
    <property type="term" value="F:ATP binding"/>
    <property type="evidence" value="ECO:0007669"/>
    <property type="project" value="UniProtKB-UniRule"/>
</dbReference>
<dbReference type="GO" id="GO:0000049">
    <property type="term" value="F:tRNA binding"/>
    <property type="evidence" value="ECO:0007669"/>
    <property type="project" value="UniProtKB-KW"/>
</dbReference>
<dbReference type="GO" id="GO:0008270">
    <property type="term" value="F:zinc ion binding"/>
    <property type="evidence" value="ECO:0007669"/>
    <property type="project" value="UniProtKB-UniRule"/>
</dbReference>
<dbReference type="GO" id="GO:0006419">
    <property type="term" value="P:alanyl-tRNA aminoacylation"/>
    <property type="evidence" value="ECO:0000318"/>
    <property type="project" value="GO_Central"/>
</dbReference>
<dbReference type="GO" id="GO:1990762">
    <property type="term" value="P:cytoplasmic alanyl-tRNA aminoacylation"/>
    <property type="evidence" value="ECO:0000266"/>
    <property type="project" value="PomBase"/>
</dbReference>
<dbReference type="GO" id="GO:0070143">
    <property type="term" value="P:mitochondrial alanyl-tRNA aminoacylation"/>
    <property type="evidence" value="ECO:0000266"/>
    <property type="project" value="PomBase"/>
</dbReference>
<dbReference type="CDD" id="cd00673">
    <property type="entry name" value="AlaRS_core"/>
    <property type="match status" value="1"/>
</dbReference>
<dbReference type="FunFam" id="2.40.30.130:FF:000004">
    <property type="entry name" value="Alanine--tRNA ligase"/>
    <property type="match status" value="1"/>
</dbReference>
<dbReference type="FunFam" id="3.10.310.40:FF:000003">
    <property type="entry name" value="Alanine--tRNA ligase"/>
    <property type="match status" value="1"/>
</dbReference>
<dbReference type="FunFam" id="3.30.930.10:FF:000011">
    <property type="entry name" value="Alanine--tRNA ligase, cytoplasmic"/>
    <property type="match status" value="1"/>
</dbReference>
<dbReference type="FunFam" id="3.30.980.10:FF:000004">
    <property type="entry name" value="Alanine--tRNA ligase, cytoplasmic"/>
    <property type="match status" value="1"/>
</dbReference>
<dbReference type="Gene3D" id="2.40.30.130">
    <property type="match status" value="1"/>
</dbReference>
<dbReference type="Gene3D" id="3.10.310.40">
    <property type="match status" value="1"/>
</dbReference>
<dbReference type="Gene3D" id="3.30.930.10">
    <property type="entry name" value="Bira Bifunctional Protein, Domain 2"/>
    <property type="match status" value="1"/>
</dbReference>
<dbReference type="Gene3D" id="3.30.980.10">
    <property type="entry name" value="Threonyl-trna Synthetase, Chain A, domain 2"/>
    <property type="match status" value="1"/>
</dbReference>
<dbReference type="HAMAP" id="MF_00036_B">
    <property type="entry name" value="Ala_tRNA_synth_B"/>
    <property type="match status" value="1"/>
</dbReference>
<dbReference type="InterPro" id="IPR045864">
    <property type="entry name" value="aa-tRNA-synth_II/BPL/LPL"/>
</dbReference>
<dbReference type="InterPro" id="IPR002318">
    <property type="entry name" value="Ala-tRNA-lgiase_IIc"/>
</dbReference>
<dbReference type="InterPro" id="IPR018162">
    <property type="entry name" value="Ala-tRNA-ligase_IIc_anticod-bd"/>
</dbReference>
<dbReference type="InterPro" id="IPR018165">
    <property type="entry name" value="Ala-tRNA-synth_IIc_core"/>
</dbReference>
<dbReference type="InterPro" id="IPR018164">
    <property type="entry name" value="Ala-tRNA-synth_IIc_N"/>
</dbReference>
<dbReference type="InterPro" id="IPR050058">
    <property type="entry name" value="Ala-tRNA_ligase"/>
</dbReference>
<dbReference type="InterPro" id="IPR023033">
    <property type="entry name" value="Ala_tRNA_ligase_euk/bac"/>
</dbReference>
<dbReference type="InterPro" id="IPR003156">
    <property type="entry name" value="DHHA1_dom"/>
</dbReference>
<dbReference type="InterPro" id="IPR018163">
    <property type="entry name" value="Thr/Ala-tRNA-synth_IIc_edit"/>
</dbReference>
<dbReference type="InterPro" id="IPR009000">
    <property type="entry name" value="Transl_B-barrel_sf"/>
</dbReference>
<dbReference type="InterPro" id="IPR012947">
    <property type="entry name" value="tRNA_SAD"/>
</dbReference>
<dbReference type="NCBIfam" id="TIGR00344">
    <property type="entry name" value="alaS"/>
    <property type="match status" value="1"/>
</dbReference>
<dbReference type="PANTHER" id="PTHR11777:SF9">
    <property type="entry name" value="ALANINE--TRNA LIGASE, CYTOPLASMIC"/>
    <property type="match status" value="1"/>
</dbReference>
<dbReference type="PANTHER" id="PTHR11777">
    <property type="entry name" value="ALANYL-TRNA SYNTHETASE"/>
    <property type="match status" value="1"/>
</dbReference>
<dbReference type="Pfam" id="PF02272">
    <property type="entry name" value="DHHA1"/>
    <property type="match status" value="1"/>
</dbReference>
<dbReference type="Pfam" id="PF01411">
    <property type="entry name" value="tRNA-synt_2c"/>
    <property type="match status" value="1"/>
</dbReference>
<dbReference type="Pfam" id="PF07973">
    <property type="entry name" value="tRNA_SAD"/>
    <property type="match status" value="1"/>
</dbReference>
<dbReference type="PRINTS" id="PR00980">
    <property type="entry name" value="TRNASYNTHALA"/>
</dbReference>
<dbReference type="SMART" id="SM00863">
    <property type="entry name" value="tRNA_SAD"/>
    <property type="match status" value="1"/>
</dbReference>
<dbReference type="SUPFAM" id="SSF55681">
    <property type="entry name" value="Class II aaRS and biotin synthetases"/>
    <property type="match status" value="1"/>
</dbReference>
<dbReference type="SUPFAM" id="SSF101353">
    <property type="entry name" value="Putative anticodon-binding domain of alanyl-tRNA synthetase (AlaRS)"/>
    <property type="match status" value="1"/>
</dbReference>
<dbReference type="SUPFAM" id="SSF55186">
    <property type="entry name" value="ThrRS/AlaRS common domain"/>
    <property type="match status" value="1"/>
</dbReference>
<dbReference type="SUPFAM" id="SSF50447">
    <property type="entry name" value="Translation proteins"/>
    <property type="match status" value="1"/>
</dbReference>
<dbReference type="PROSITE" id="PS50860">
    <property type="entry name" value="AA_TRNA_LIGASE_II_ALA"/>
    <property type="match status" value="1"/>
</dbReference>
<feature type="chain" id="PRO_0000075286" description="Alanine--tRNA ligase">
    <location>
        <begin position="1"/>
        <end position="959"/>
    </location>
</feature>
<feature type="binding site" evidence="1">
    <location>
        <position position="606"/>
    </location>
    <ligand>
        <name>Zn(2+)</name>
        <dbReference type="ChEBI" id="CHEBI:29105"/>
    </ligand>
</feature>
<feature type="binding site" evidence="1">
    <location>
        <position position="610"/>
    </location>
    <ligand>
        <name>Zn(2+)</name>
        <dbReference type="ChEBI" id="CHEBI:29105"/>
    </ligand>
</feature>
<feature type="binding site" evidence="1">
    <location>
        <position position="725"/>
    </location>
    <ligand>
        <name>Zn(2+)</name>
        <dbReference type="ChEBI" id="CHEBI:29105"/>
    </ligand>
</feature>
<feature type="binding site" evidence="1">
    <location>
        <position position="729"/>
    </location>
    <ligand>
        <name>Zn(2+)</name>
        <dbReference type="ChEBI" id="CHEBI:29105"/>
    </ligand>
</feature>
<feature type="modified residue" description="Phosphoserine" evidence="2">
    <location>
        <position position="389"/>
    </location>
</feature>
<sequence>MTAESEVVNWPANEIRRTFLKYFEDHGHTIVPSSSVIPYDDPTLLFANAGMNQFKPIFLGTVDPSSDFAKLKRACDSQKCIRAGGKHNDLEDVGKDNYHHTMFEMLGNWSFGDYFKKEAIAMAWDLLTNVYGLKKDQLYVTYFGGHEESGLEPDLEARQLWLDIGIDESRVIPGSLKDNFWEMGDQGPCGPCSEIHYDRIGNRTVPELVNMDDPNVLEIWNIVFIQFNREKDGSLRPLPNRHVDTGMGFERLVSVIQNKTSNYDTDVFSPIFAKIQELTNARPYTGKMGDEDVDGIDTAYRVVADHVRTLTFAISDGGVPNNEGRGYVLRRILRRGARYVRKKFGVPIGNFFSRLSLTVVEQMGDFFPELKRKVDDVRELLDEEEESFSRTLDRGEKMFEQYAAAAKKTPSKTLQGNDVWRLYETYGFPVDLTHLMAEEAGIKIDEPGFEAAQARSKEISKQASKGGSSGDDLLVLDVHALGALSKMDDIPETDDVFKHNSVSLKSVIKGIYHKGGFQKSTEGFNSGEQLGLLLDRTNFYAEQGGQEYDTGHIVIDGVADFRVTNVQVYAGYVLHTGFLEYGNLTVNDSVVCEYDEIRRWHLMNNHTVTHILNLALRNTLGDGIDQRGSLVSQEKLRFDFSYKSSIPIDKLLLVENYCNNVIQDNLSVYSKEVALSKAKEINGLRAVFGEVYPDPVRVVCIGVDIDTLLQEPKKPDWTKYSIEFCGGTHCDKSGEIKDFVILEENGIAKGIRRIVAVTSTEANRVSRLANEFDARIAKLEKMPFSPAKEAELKKISVDLSKLVVAAVRKHAMKERIAKITKQVQEHVKAINAAEQKEVVNVVTEYFKENPDMSFVVAKVPISANPKALSFALTYAKKNLKDKSIYLLASDDTKVAHACLVSPEAMKKLTPQEWSQKVCHSIGGRSGGKGDTCQGVGDKPLSIDVAVEEAIEFFQGKLTI</sequence>
<name>SYA_SCHPO</name>